<name>ODPA2_ARATH</name>
<evidence type="ECO:0000250" key="1"/>
<evidence type="ECO:0000250" key="2">
    <source>
        <dbReference type="UniProtKB" id="P08559"/>
    </source>
</evidence>
<evidence type="ECO:0000255" key="3"/>
<evidence type="ECO:0000269" key="4">
    <source>
    </source>
</evidence>
<evidence type="ECO:0000269" key="5">
    <source>
    </source>
</evidence>
<evidence type="ECO:0000305" key="6"/>
<organism>
    <name type="scientific">Arabidopsis thaliana</name>
    <name type="common">Mouse-ear cress</name>
    <dbReference type="NCBI Taxonomy" id="3702"/>
    <lineage>
        <taxon>Eukaryota</taxon>
        <taxon>Viridiplantae</taxon>
        <taxon>Streptophyta</taxon>
        <taxon>Embryophyta</taxon>
        <taxon>Tracheophyta</taxon>
        <taxon>Spermatophyta</taxon>
        <taxon>Magnoliopsida</taxon>
        <taxon>eudicotyledons</taxon>
        <taxon>Gunneridae</taxon>
        <taxon>Pentapetalae</taxon>
        <taxon>rosids</taxon>
        <taxon>malvids</taxon>
        <taxon>Brassicales</taxon>
        <taxon>Brassicaceae</taxon>
        <taxon>Camelineae</taxon>
        <taxon>Arabidopsis</taxon>
    </lineage>
</organism>
<protein>
    <recommendedName>
        <fullName>Pyruvate dehydrogenase E1 component subunit alpha-2, mitochondrial</fullName>
        <shortName>PDHE1-A</shortName>
        <ecNumber>1.2.4.1</ecNumber>
    </recommendedName>
    <alternativeName>
        <fullName>Protein IAA-CONJUGATE-RESISTANT 4</fullName>
    </alternativeName>
</protein>
<sequence length="393" mass="43359">MALSRLSSRSNTFLKPAITALPSSIRRHVSTDSSPITIETAVPFTSHLCESPSRSVETSSEEILAFFRDMARMRRMEIAADSLYKAKLIRGFCHLYDGQEALAVGMEAAITKKDAIITSYRDHCTFIGRGGKLVDAFSELMGRKTGCSHGKGGSMHFYKKDASFYGGHGIVGAQIPLGCGLAFAQKYNKDEAVTFALYGDGAANQGQLFEALNISALWDLPAILVCENNHYGMGTATWRSAKSPAYFKRGDYVPGLKVDGMDALAVKQACKFAKEHALKNGPIILEMDTYRYHGHSMSDPGSTYRTRDEISGVRQVRDPIERVRKLLLTHDIATEKELKDMEKEIRKEVDDAVAQAKESPIPDASELFTNMYVKDCGVESFGADRKELKVTLP</sequence>
<proteinExistence type="evidence at protein level"/>
<keyword id="KW-0460">Magnesium</keyword>
<keyword id="KW-0479">Metal-binding</keyword>
<keyword id="KW-0496">Mitochondrion</keyword>
<keyword id="KW-0560">Oxidoreductase</keyword>
<keyword id="KW-0670">Pyruvate</keyword>
<keyword id="KW-1185">Reference proteome</keyword>
<keyword id="KW-0786">Thiamine pyrophosphate</keyword>
<keyword id="KW-0809">Transit peptide</keyword>
<reference key="1">
    <citation type="journal article" date="2004" name="Plant Physiol.">
        <title>IAR4, a gene required for auxin conjugate sensitivity in Arabidopsis, encodes a pyruvate dehydrogenase E1alpha homolog.</title>
        <authorList>
            <person name="LeClere S."/>
            <person name="Rampey R.A."/>
            <person name="Bartel B."/>
        </authorList>
    </citation>
    <scope>NUCLEOTIDE SEQUENCE [MRNA]</scope>
    <scope>MUTAGENESIS OF ARG-121</scope>
    <scope>DISRUPTION PHENOTYPE</scope>
    <source>
        <strain>cv. Columbia</strain>
    </source>
</reference>
<reference key="2">
    <citation type="journal article" date="2000" name="Nature">
        <title>Sequence and analysis of chromosome 1 of the plant Arabidopsis thaliana.</title>
        <authorList>
            <person name="Theologis A."/>
            <person name="Ecker J.R."/>
            <person name="Palm C.J."/>
            <person name="Federspiel N.A."/>
            <person name="Kaul S."/>
            <person name="White O."/>
            <person name="Alonso J."/>
            <person name="Altafi H."/>
            <person name="Araujo R."/>
            <person name="Bowman C.L."/>
            <person name="Brooks S.Y."/>
            <person name="Buehler E."/>
            <person name="Chan A."/>
            <person name="Chao Q."/>
            <person name="Chen H."/>
            <person name="Cheuk R.F."/>
            <person name="Chin C.W."/>
            <person name="Chung M.K."/>
            <person name="Conn L."/>
            <person name="Conway A.B."/>
            <person name="Conway A.R."/>
            <person name="Creasy T.H."/>
            <person name="Dewar K."/>
            <person name="Dunn P."/>
            <person name="Etgu P."/>
            <person name="Feldblyum T.V."/>
            <person name="Feng J.-D."/>
            <person name="Fong B."/>
            <person name="Fujii C.Y."/>
            <person name="Gill J.E."/>
            <person name="Goldsmith A.D."/>
            <person name="Haas B."/>
            <person name="Hansen N.F."/>
            <person name="Hughes B."/>
            <person name="Huizar L."/>
            <person name="Hunter J.L."/>
            <person name="Jenkins J."/>
            <person name="Johnson-Hopson C."/>
            <person name="Khan S."/>
            <person name="Khaykin E."/>
            <person name="Kim C.J."/>
            <person name="Koo H.L."/>
            <person name="Kremenetskaia I."/>
            <person name="Kurtz D.B."/>
            <person name="Kwan A."/>
            <person name="Lam B."/>
            <person name="Langin-Hooper S."/>
            <person name="Lee A."/>
            <person name="Lee J.M."/>
            <person name="Lenz C.A."/>
            <person name="Li J.H."/>
            <person name="Li Y.-P."/>
            <person name="Lin X."/>
            <person name="Liu S.X."/>
            <person name="Liu Z.A."/>
            <person name="Luros J.S."/>
            <person name="Maiti R."/>
            <person name="Marziali A."/>
            <person name="Militscher J."/>
            <person name="Miranda M."/>
            <person name="Nguyen M."/>
            <person name="Nierman W.C."/>
            <person name="Osborne B.I."/>
            <person name="Pai G."/>
            <person name="Peterson J."/>
            <person name="Pham P.K."/>
            <person name="Rizzo M."/>
            <person name="Rooney T."/>
            <person name="Rowley D."/>
            <person name="Sakano H."/>
            <person name="Salzberg S.L."/>
            <person name="Schwartz J.R."/>
            <person name="Shinn P."/>
            <person name="Southwick A.M."/>
            <person name="Sun H."/>
            <person name="Tallon L.J."/>
            <person name="Tambunga G."/>
            <person name="Toriumi M.J."/>
            <person name="Town C.D."/>
            <person name="Utterback T."/>
            <person name="Van Aken S."/>
            <person name="Vaysberg M."/>
            <person name="Vysotskaia V.S."/>
            <person name="Walker M."/>
            <person name="Wu D."/>
            <person name="Yu G."/>
            <person name="Fraser C.M."/>
            <person name="Venter J.C."/>
            <person name="Davis R.W."/>
        </authorList>
    </citation>
    <scope>NUCLEOTIDE SEQUENCE [LARGE SCALE GENOMIC DNA]</scope>
    <source>
        <strain>cv. Columbia</strain>
    </source>
</reference>
<reference key="3">
    <citation type="journal article" date="2017" name="Plant J.">
        <title>Araport11: a complete reannotation of the Arabidopsis thaliana reference genome.</title>
        <authorList>
            <person name="Cheng C.Y."/>
            <person name="Krishnakumar V."/>
            <person name="Chan A.P."/>
            <person name="Thibaud-Nissen F."/>
            <person name="Schobel S."/>
            <person name="Town C.D."/>
        </authorList>
    </citation>
    <scope>GENOME REANNOTATION</scope>
    <source>
        <strain>cv. Columbia</strain>
    </source>
</reference>
<reference key="4">
    <citation type="journal article" date="2003" name="Science">
        <title>Empirical analysis of transcriptional activity in the Arabidopsis genome.</title>
        <authorList>
            <person name="Yamada K."/>
            <person name="Lim J."/>
            <person name="Dale J.M."/>
            <person name="Chen H."/>
            <person name="Shinn P."/>
            <person name="Palm C.J."/>
            <person name="Southwick A.M."/>
            <person name="Wu H.C."/>
            <person name="Kim C.J."/>
            <person name="Nguyen M."/>
            <person name="Pham P.K."/>
            <person name="Cheuk R.F."/>
            <person name="Karlin-Newmann G."/>
            <person name="Liu S.X."/>
            <person name="Lam B."/>
            <person name="Sakano H."/>
            <person name="Wu T."/>
            <person name="Yu G."/>
            <person name="Miranda M."/>
            <person name="Quach H.L."/>
            <person name="Tripp M."/>
            <person name="Chang C.H."/>
            <person name="Lee J.M."/>
            <person name="Toriumi M.J."/>
            <person name="Chan M.M."/>
            <person name="Tang C.C."/>
            <person name="Onodera C.S."/>
            <person name="Deng J.M."/>
            <person name="Akiyama K."/>
            <person name="Ansari Y."/>
            <person name="Arakawa T."/>
            <person name="Banh J."/>
            <person name="Banno F."/>
            <person name="Bowser L."/>
            <person name="Brooks S.Y."/>
            <person name="Carninci P."/>
            <person name="Chao Q."/>
            <person name="Choy N."/>
            <person name="Enju A."/>
            <person name="Goldsmith A.D."/>
            <person name="Gurjal M."/>
            <person name="Hansen N.F."/>
            <person name="Hayashizaki Y."/>
            <person name="Johnson-Hopson C."/>
            <person name="Hsuan V.W."/>
            <person name="Iida K."/>
            <person name="Karnes M."/>
            <person name="Khan S."/>
            <person name="Koesema E."/>
            <person name="Ishida J."/>
            <person name="Jiang P.X."/>
            <person name="Jones T."/>
            <person name="Kawai J."/>
            <person name="Kamiya A."/>
            <person name="Meyers C."/>
            <person name="Nakajima M."/>
            <person name="Narusaka M."/>
            <person name="Seki M."/>
            <person name="Sakurai T."/>
            <person name="Satou M."/>
            <person name="Tamse R."/>
            <person name="Vaysberg M."/>
            <person name="Wallender E.K."/>
            <person name="Wong C."/>
            <person name="Yamamura Y."/>
            <person name="Yuan S."/>
            <person name="Shinozaki K."/>
            <person name="Davis R.W."/>
            <person name="Theologis A."/>
            <person name="Ecker J.R."/>
        </authorList>
    </citation>
    <scope>NUCLEOTIDE SEQUENCE [LARGE SCALE MRNA]</scope>
    <source>
        <strain>cv. Columbia</strain>
    </source>
</reference>
<reference key="5">
    <citation type="submission" date="2002-03" db="EMBL/GenBank/DDBJ databases">
        <title>Full-length cDNA from Arabidopsis thaliana.</title>
        <authorList>
            <person name="Brover V.V."/>
            <person name="Troukhan M.E."/>
            <person name="Alexandrov N.A."/>
            <person name="Lu Y.-P."/>
            <person name="Flavell R.B."/>
            <person name="Feldmann K.A."/>
        </authorList>
    </citation>
    <scope>NUCLEOTIDE SEQUENCE [LARGE SCALE MRNA]</scope>
</reference>
<reference key="6">
    <citation type="journal article" date="2004" name="Plant Cell">
        <title>Experimental analysis of the Arabidopsis mitochondrial proteome highlights signaling and regulatory components, provides assessment of targeting prediction programs, and indicates plant-specific mitochondrial proteins.</title>
        <authorList>
            <person name="Heazlewood J.L."/>
            <person name="Tonti-Filippini J.S."/>
            <person name="Gout A.M."/>
            <person name="Day D.A."/>
            <person name="Whelan J."/>
            <person name="Millar A.H."/>
        </authorList>
    </citation>
    <scope>IDENTIFICATION BY MASS SPECTROMETRY</scope>
    <scope>SUBCELLULAR LOCATION [LARGE SCALE ANALYSIS]</scope>
    <source>
        <strain>cv. Landsberg erecta</strain>
    </source>
</reference>
<accession>Q8H1Y0</accession>
<accession>O48685</accession>
<comment type="function">
    <text>The pyruvate dehydrogenase complex catalyzes the overall conversion of pyruvate to acetyl-CoA and CO(2). It contains multiple copies of three enzymatic components: pyruvate dehydrogenase (E1), dihydrolipoamide acetyltransferase (E2) and lipoamide dehydrogenase (E3).</text>
</comment>
<comment type="catalytic activity">
    <reaction>
        <text>N(6)-[(R)-lipoyl]-L-lysyl-[protein] + pyruvate + H(+) = N(6)-[(R)-S(8)-acetyldihydrolipoyl]-L-lysyl-[protein] + CO2</text>
        <dbReference type="Rhea" id="RHEA:19189"/>
        <dbReference type="Rhea" id="RHEA-COMP:10474"/>
        <dbReference type="Rhea" id="RHEA-COMP:10478"/>
        <dbReference type="ChEBI" id="CHEBI:15361"/>
        <dbReference type="ChEBI" id="CHEBI:15378"/>
        <dbReference type="ChEBI" id="CHEBI:16526"/>
        <dbReference type="ChEBI" id="CHEBI:83099"/>
        <dbReference type="ChEBI" id="CHEBI:83111"/>
        <dbReference type="EC" id="1.2.4.1"/>
    </reaction>
</comment>
<comment type="cofactor">
    <cofactor evidence="2">
        <name>thiamine diphosphate</name>
        <dbReference type="ChEBI" id="CHEBI:58937"/>
    </cofactor>
    <cofactor evidence="2">
        <name>Mg(2+)</name>
        <dbReference type="ChEBI" id="CHEBI:18420"/>
    </cofactor>
</comment>
<comment type="activity regulation">
    <text evidence="1">E1 activity is regulated by phosphorylation (inactivation) and dephosphorylation (activation) of the alpha subunit.</text>
</comment>
<comment type="subunit">
    <text evidence="1">Tetramer of 2 alpha and 2 beta subunits.</text>
</comment>
<comment type="subcellular location">
    <subcellularLocation>
        <location evidence="4">Mitochondrion matrix</location>
    </subcellularLocation>
</comment>
<comment type="disruption phenotype">
    <text evidence="5">Reduced sensitivity to several IAA-amino acid conjugates.</text>
</comment>
<feature type="transit peptide" description="Mitochondrion" evidence="3">
    <location>
        <begin position="1"/>
        <end position="28"/>
    </location>
</feature>
<feature type="chain" id="PRO_0000260024" description="Pyruvate dehydrogenase E1 component subunit alpha-2, mitochondrial">
    <location>
        <begin position="29"/>
        <end position="393"/>
    </location>
</feature>
<feature type="binding site" evidence="2">
    <location>
        <position position="94"/>
    </location>
    <ligand>
        <name>pyruvate</name>
        <dbReference type="ChEBI" id="CHEBI:15361"/>
    </ligand>
</feature>
<feature type="binding site" evidence="2">
    <location>
        <position position="120"/>
    </location>
    <ligand>
        <name>pyruvate</name>
        <dbReference type="ChEBI" id="CHEBI:15361"/>
    </ligand>
</feature>
<feature type="binding site" evidence="2">
    <location>
        <position position="120"/>
    </location>
    <ligand>
        <name>thiamine diphosphate</name>
        <dbReference type="ChEBI" id="CHEBI:58937"/>
        <note>ligand shared with beta subunit</note>
    </ligand>
</feature>
<feature type="binding site" evidence="2">
    <location>
        <position position="121"/>
    </location>
    <ligand>
        <name>pyruvate</name>
        <dbReference type="ChEBI" id="CHEBI:15361"/>
    </ligand>
</feature>
<feature type="binding site" evidence="2">
    <location>
        <position position="121"/>
    </location>
    <ligand>
        <name>thiamine diphosphate</name>
        <dbReference type="ChEBI" id="CHEBI:58937"/>
        <note>ligand shared with beta subunit</note>
    </ligand>
</feature>
<feature type="binding site" evidence="2">
    <location>
        <position position="169"/>
    </location>
    <ligand>
        <name>pyruvate</name>
        <dbReference type="ChEBI" id="CHEBI:15361"/>
    </ligand>
</feature>
<feature type="binding site" evidence="2">
    <location>
        <position position="169"/>
    </location>
    <ligand>
        <name>thiamine diphosphate</name>
        <dbReference type="ChEBI" id="CHEBI:58937"/>
        <note>ligand shared with beta subunit</note>
    </ligand>
</feature>
<feature type="binding site" evidence="2">
    <location>
        <position position="171"/>
    </location>
    <ligand>
        <name>pyruvate</name>
        <dbReference type="ChEBI" id="CHEBI:15361"/>
    </ligand>
</feature>
<feature type="binding site" evidence="2">
    <location>
        <position position="171"/>
    </location>
    <ligand>
        <name>thiamine diphosphate</name>
        <dbReference type="ChEBI" id="CHEBI:58937"/>
        <note>ligand shared with beta subunit</note>
    </ligand>
</feature>
<feature type="binding site" evidence="2">
    <location>
        <position position="200"/>
    </location>
    <ligand>
        <name>Mg(2+)</name>
        <dbReference type="ChEBI" id="CHEBI:18420"/>
    </ligand>
</feature>
<feature type="binding site" evidence="2">
    <location>
        <position position="200"/>
    </location>
    <ligand>
        <name>pyruvate</name>
        <dbReference type="ChEBI" id="CHEBI:15361"/>
    </ligand>
</feature>
<feature type="binding site" evidence="2">
    <location>
        <position position="200"/>
    </location>
    <ligand>
        <name>thiamine diphosphate</name>
        <dbReference type="ChEBI" id="CHEBI:58937"/>
        <note>ligand shared with beta subunit</note>
    </ligand>
</feature>
<feature type="binding site" evidence="2">
    <location>
        <position position="201"/>
    </location>
    <ligand>
        <name>pyruvate</name>
        <dbReference type="ChEBI" id="CHEBI:15361"/>
    </ligand>
</feature>
<feature type="binding site" evidence="2">
    <location>
        <position position="201"/>
    </location>
    <ligand>
        <name>thiamine diphosphate</name>
        <dbReference type="ChEBI" id="CHEBI:58937"/>
        <note>ligand shared with beta subunit</note>
    </ligand>
</feature>
<feature type="binding site" evidence="2">
    <location>
        <position position="202"/>
    </location>
    <ligand>
        <name>pyruvate</name>
        <dbReference type="ChEBI" id="CHEBI:15361"/>
    </ligand>
</feature>
<feature type="binding site" evidence="2">
    <location>
        <position position="202"/>
    </location>
    <ligand>
        <name>thiamine diphosphate</name>
        <dbReference type="ChEBI" id="CHEBI:58937"/>
        <note>ligand shared with beta subunit</note>
    </ligand>
</feature>
<feature type="binding site" evidence="2">
    <location>
        <position position="229"/>
    </location>
    <ligand>
        <name>Mg(2+)</name>
        <dbReference type="ChEBI" id="CHEBI:18420"/>
    </ligand>
</feature>
<feature type="binding site" evidence="2">
    <location>
        <position position="229"/>
    </location>
    <ligand>
        <name>pyruvate</name>
        <dbReference type="ChEBI" id="CHEBI:15361"/>
    </ligand>
</feature>
<feature type="binding site" evidence="2">
    <location>
        <position position="229"/>
    </location>
    <ligand>
        <name>thiamine diphosphate</name>
        <dbReference type="ChEBI" id="CHEBI:58937"/>
        <note>ligand shared with beta subunit</note>
    </ligand>
</feature>
<feature type="binding site" evidence="2">
    <location>
        <position position="231"/>
    </location>
    <ligand>
        <name>Mg(2+)</name>
        <dbReference type="ChEBI" id="CHEBI:18420"/>
    </ligand>
</feature>
<feature type="binding site" evidence="2">
    <location>
        <position position="231"/>
    </location>
    <ligand>
        <name>pyruvate</name>
        <dbReference type="ChEBI" id="CHEBI:15361"/>
    </ligand>
</feature>
<feature type="binding site" evidence="2">
    <location>
        <position position="295"/>
    </location>
    <ligand>
        <name>thiamine diphosphate</name>
        <dbReference type="ChEBI" id="CHEBI:58937"/>
        <note>ligand shared with beta subunit</note>
    </ligand>
</feature>
<feature type="mutagenesis site" description="In iar4-1; reduced sensitivity to several IAA-amino acid conjugates." evidence="5">
    <original>R</original>
    <variation>C</variation>
    <location>
        <position position="121"/>
    </location>
</feature>
<feature type="sequence conflict" description="In Ref. 1; AAN15218." evidence="6" ref="1">
    <original>Y</original>
    <variation>D</variation>
    <location>
        <position position="231"/>
    </location>
</feature>
<gene>
    <name type="primary">IAR4</name>
    <name type="ordered locus">At1g24180</name>
    <name type="ORF">F3I6.11</name>
</gene>
<dbReference type="EC" id="1.2.4.1"/>
<dbReference type="EMBL" id="AY135561">
    <property type="protein sequence ID" value="AAN15218.1"/>
    <property type="molecule type" value="mRNA"/>
</dbReference>
<dbReference type="EMBL" id="AC002396">
    <property type="protein sequence ID" value="AAC00577.1"/>
    <property type="molecule type" value="Genomic_DNA"/>
</dbReference>
<dbReference type="EMBL" id="CP002684">
    <property type="protein sequence ID" value="AEE30492.1"/>
    <property type="molecule type" value="Genomic_DNA"/>
</dbReference>
<dbReference type="EMBL" id="AF360215">
    <property type="protein sequence ID" value="AAK25925.1"/>
    <property type="molecule type" value="mRNA"/>
</dbReference>
<dbReference type="EMBL" id="AY051018">
    <property type="protein sequence ID" value="AAK93695.1"/>
    <property type="molecule type" value="mRNA"/>
</dbReference>
<dbReference type="EMBL" id="AY088101">
    <property type="protein sequence ID" value="AAM65647.1"/>
    <property type="molecule type" value="mRNA"/>
</dbReference>
<dbReference type="PIR" id="T00648">
    <property type="entry name" value="T00648"/>
</dbReference>
<dbReference type="RefSeq" id="NP_173828.1">
    <property type="nucleotide sequence ID" value="NM_102264.5"/>
</dbReference>
<dbReference type="SMR" id="Q8H1Y0"/>
<dbReference type="BioGRID" id="24269">
    <property type="interactions" value="10"/>
</dbReference>
<dbReference type="FunCoup" id="Q8H1Y0">
    <property type="interactions" value="2723"/>
</dbReference>
<dbReference type="IntAct" id="Q8H1Y0">
    <property type="interactions" value="1"/>
</dbReference>
<dbReference type="STRING" id="3702.Q8H1Y0"/>
<dbReference type="iPTMnet" id="Q8H1Y0"/>
<dbReference type="PaxDb" id="3702-AT1G24180.1"/>
<dbReference type="ProteomicsDB" id="250957"/>
<dbReference type="EnsemblPlants" id="AT1G24180.1">
    <property type="protein sequence ID" value="AT1G24180.1"/>
    <property type="gene ID" value="AT1G24180"/>
</dbReference>
<dbReference type="GeneID" id="839031"/>
<dbReference type="Gramene" id="AT1G24180.1">
    <property type="protein sequence ID" value="AT1G24180.1"/>
    <property type="gene ID" value="AT1G24180"/>
</dbReference>
<dbReference type="KEGG" id="ath:AT1G24180"/>
<dbReference type="Araport" id="AT1G24180"/>
<dbReference type="TAIR" id="AT1G24180">
    <property type="gene designation" value="IAR4"/>
</dbReference>
<dbReference type="eggNOG" id="KOG0225">
    <property type="taxonomic scope" value="Eukaryota"/>
</dbReference>
<dbReference type="HOGENOM" id="CLU_029393_5_2_1"/>
<dbReference type="InParanoid" id="Q8H1Y0"/>
<dbReference type="OMA" id="GLRINGM"/>
<dbReference type="OrthoDB" id="10256198at2759"/>
<dbReference type="PhylomeDB" id="Q8H1Y0"/>
<dbReference type="BioCyc" id="ARA:AT1G24180-MONOMER"/>
<dbReference type="CD-CODE" id="4299E36E">
    <property type="entry name" value="Nucleolus"/>
</dbReference>
<dbReference type="PRO" id="PR:Q8H1Y0"/>
<dbReference type="Proteomes" id="UP000006548">
    <property type="component" value="Chromosome 1"/>
</dbReference>
<dbReference type="ExpressionAtlas" id="Q8H1Y0">
    <property type="expression patterns" value="baseline and differential"/>
</dbReference>
<dbReference type="GO" id="GO:0005829">
    <property type="term" value="C:cytosol"/>
    <property type="evidence" value="ECO:0007005"/>
    <property type="project" value="TAIR"/>
</dbReference>
<dbReference type="GO" id="GO:0005759">
    <property type="term" value="C:mitochondrial matrix"/>
    <property type="evidence" value="ECO:0007669"/>
    <property type="project" value="UniProtKB-SubCell"/>
</dbReference>
<dbReference type="GO" id="GO:0005739">
    <property type="term" value="C:mitochondrion"/>
    <property type="evidence" value="ECO:0007005"/>
    <property type="project" value="TAIR"/>
</dbReference>
<dbReference type="GO" id="GO:0005634">
    <property type="term" value="C:nucleus"/>
    <property type="evidence" value="ECO:0007005"/>
    <property type="project" value="TAIR"/>
</dbReference>
<dbReference type="GO" id="GO:0050897">
    <property type="term" value="F:cobalt ion binding"/>
    <property type="evidence" value="ECO:0007005"/>
    <property type="project" value="TAIR"/>
</dbReference>
<dbReference type="GO" id="GO:0004739">
    <property type="term" value="F:pyruvate dehydrogenase (acetyl-transferring) activity"/>
    <property type="evidence" value="ECO:0007669"/>
    <property type="project" value="UniProtKB-EC"/>
</dbReference>
<dbReference type="GO" id="GO:0008270">
    <property type="term" value="F:zinc ion binding"/>
    <property type="evidence" value="ECO:0007005"/>
    <property type="project" value="TAIR"/>
</dbReference>
<dbReference type="GO" id="GO:0006086">
    <property type="term" value="P:pyruvate decarboxylation to acetyl-CoA"/>
    <property type="evidence" value="ECO:0007669"/>
    <property type="project" value="InterPro"/>
</dbReference>
<dbReference type="CDD" id="cd02000">
    <property type="entry name" value="TPP_E1_PDC_ADC_BCADC"/>
    <property type="match status" value="1"/>
</dbReference>
<dbReference type="FunFam" id="3.40.50.970:FF:000013">
    <property type="entry name" value="Pyruvate dehydrogenase E1 component subunit alpha"/>
    <property type="match status" value="1"/>
</dbReference>
<dbReference type="Gene3D" id="3.40.50.970">
    <property type="match status" value="1"/>
</dbReference>
<dbReference type="InterPro" id="IPR001017">
    <property type="entry name" value="DH_E1"/>
</dbReference>
<dbReference type="InterPro" id="IPR050642">
    <property type="entry name" value="PDH_E1_Alpha_Subunit"/>
</dbReference>
<dbReference type="InterPro" id="IPR017597">
    <property type="entry name" value="Pyrv_DH_E1_asu_subgrp-y"/>
</dbReference>
<dbReference type="InterPro" id="IPR029061">
    <property type="entry name" value="THDP-binding"/>
</dbReference>
<dbReference type="NCBIfam" id="TIGR03182">
    <property type="entry name" value="PDH_E1_alph_y"/>
    <property type="match status" value="1"/>
</dbReference>
<dbReference type="PANTHER" id="PTHR11516:SF56">
    <property type="entry name" value="PYRUVATE DEHYDROGENASE E1 COMPONENT SUBUNIT ALPHA-2, MITOCHONDRIAL"/>
    <property type="match status" value="1"/>
</dbReference>
<dbReference type="PANTHER" id="PTHR11516">
    <property type="entry name" value="PYRUVATE DEHYDROGENASE E1 COMPONENT, ALPHA SUBUNIT BACTERIAL AND ORGANELLAR"/>
    <property type="match status" value="1"/>
</dbReference>
<dbReference type="Pfam" id="PF00676">
    <property type="entry name" value="E1_dh"/>
    <property type="match status" value="1"/>
</dbReference>
<dbReference type="SUPFAM" id="SSF52518">
    <property type="entry name" value="Thiamin diphosphate-binding fold (THDP-binding)"/>
    <property type="match status" value="1"/>
</dbReference>